<comment type="function">
    <text evidence="5 6">Involved in pyrimidine base degradation. Catalyzes the reduction of uracil to 5,6-dihydrouracil (DHU) by using NADH as a specific cosubstrate and the reduction of thymine to 5,6-dihydrothymine (DHT). Involved in the recycling of nitrogen from nucleobases to general nitrogen metabolism.</text>
</comment>
<comment type="catalytic activity">
    <reaction evidence="10">
        <text>5,6-dihydrouracil + NADP(+) = uracil + NADPH + H(+)</text>
        <dbReference type="Rhea" id="RHEA:18093"/>
        <dbReference type="ChEBI" id="CHEBI:15378"/>
        <dbReference type="ChEBI" id="CHEBI:15901"/>
        <dbReference type="ChEBI" id="CHEBI:17568"/>
        <dbReference type="ChEBI" id="CHEBI:57783"/>
        <dbReference type="ChEBI" id="CHEBI:58349"/>
        <dbReference type="EC" id="1.3.1.2"/>
    </reaction>
</comment>
<comment type="pathway">
    <text evidence="10">Amino-acid biosynthesis; beta-alanine biosynthesis.</text>
</comment>
<comment type="subcellular location">
    <subcellularLocation>
        <location evidence="5 6">Plastid</location>
        <location evidence="5 6">Chloroplast</location>
    </subcellularLocation>
</comment>
<comment type="tissue specificity">
    <text evidence="6">Expressed in roots, leaves, stems, siliques and flowers. Highly expressed ion dry seeds.</text>
</comment>
<comment type="developmental stage">
    <text evidence="5 6">Up-regulated at days 4 and 5 after germination and during senescence.</text>
</comment>
<comment type="induction">
    <text evidence="5">Up-regulated by nitrogen limitation.</text>
</comment>
<comment type="disruption phenotype">
    <text evidence="5 6">No visible phenotype, but impaired degradation of both thymine and uracil (PubMed:19413687, PubMed:21865177). Slower germination and 2 days delay in seedling development (PubMed:21865177).</text>
</comment>
<comment type="similarity">
    <text evidence="10">Belongs to the dihydropyrimidine dehydrogenase family.</text>
</comment>
<evidence type="ECO:0000250" key="1">
    <source>
        <dbReference type="UniProtKB" id="Q28943"/>
    </source>
</evidence>
<evidence type="ECO:0000255" key="2"/>
<evidence type="ECO:0000255" key="3">
    <source>
        <dbReference type="PIRSR" id="PIRSR000164-1"/>
    </source>
</evidence>
<evidence type="ECO:0000256" key="4">
    <source>
        <dbReference type="SAM" id="MobiDB-lite"/>
    </source>
</evidence>
<evidence type="ECO:0000269" key="5">
    <source>
    </source>
</evidence>
<evidence type="ECO:0000269" key="6">
    <source>
    </source>
</evidence>
<evidence type="ECO:0000303" key="7">
    <source>
    </source>
</evidence>
<evidence type="ECO:0000303" key="8">
    <source>
    </source>
</evidence>
<evidence type="ECO:0000303" key="9">
    <source ref="1"/>
</evidence>
<evidence type="ECO:0000305" key="10"/>
<evidence type="ECO:0000312" key="11">
    <source>
        <dbReference type="Araport" id="AT3G17810"/>
    </source>
</evidence>
<evidence type="ECO:0000312" key="12">
    <source>
        <dbReference type="EMBL" id="BAB02704.1"/>
    </source>
</evidence>
<evidence type="ECO:0000312" key="13">
    <source>
        <dbReference type="Proteomes" id="UP000006548"/>
    </source>
</evidence>
<evidence type="ECO:0007744" key="14">
    <source>
    </source>
</evidence>
<protein>
    <recommendedName>
        <fullName evidence="8">Dihydropyrimidine dehydrogenase (NADP(+)), chloroplastic</fullName>
        <shortName evidence="8">DHPDH</shortName>
        <shortName>DPD</shortName>
        <ecNumber evidence="5">1.3.1.2</ecNumber>
    </recommendedName>
    <alternativeName>
        <fullName evidence="7">Dihydroorotate dehydrogenase-like protein</fullName>
    </alternativeName>
    <alternativeName>
        <fullName>Dihydrothymine dehydrogenase</fullName>
    </alternativeName>
    <alternativeName>
        <fullName>Dihydrouracil dehydrogenase</fullName>
    </alternativeName>
    <alternativeName>
        <fullName evidence="8">Protein PYRIMIDINE 1</fullName>
    </alternativeName>
</protein>
<accession>Q9LVI9</accession>
<sequence length="426" mass="46847">MASMSFALNRFSGLSSKTTLSADFDPSSRRSFLPPTRVGLKISSAAESEPDLSVTVNGLKMPNPFVIGSGPPGTNYTVMKRAFDEGWGAVIAKTVSLDASKVINVTPRYARLRTGSNGSAKTDVIGWQNIELISDRPLETMLKEFERLKKEYPDRILIASVMEEYNKTAWEELIDRVEQTGVDALEINFSCPHGMPERRMGAAVGQDCALLDEVCGWINAKATVPVWAKMTPNITDITEPARVSLKSGCEGIAAINTIMSVMGIDMKTLRPEPCVEGYSTPGGYSYKAVRPIALAKVMNIAKMMKSEFSEDRSLSGIGGVETGYDAAEFILLGSNTVQVCTGVMMHGYGHVKTLCAELKDFMKQHNFSTIEEFRGHSLQYFTTHTDLVKRQKEAVEQRKAEKRGLKSDKDWTGDGFVKETESMVSN</sequence>
<name>DPYD_ARATH</name>
<reference key="1">
    <citation type="submission" date="2002-09" db="EMBL/GenBank/DDBJ databases">
        <title>Dihydropyrimidine dehydrogenases and the evolution of the pyrimidine degradation pathway.</title>
        <authorList>
            <person name="Gojkovic Z."/>
            <person name="Sandrini M.P.B."/>
            <person name="Piskur J."/>
        </authorList>
    </citation>
    <scope>NUCLEOTIDE SEQUENCE [MRNA]</scope>
</reference>
<reference key="2">
    <citation type="journal article" date="2000" name="DNA Res.">
        <title>Structural analysis of Arabidopsis thaliana chromosome 3. I. Sequence features of the regions of 4,504,864 bp covered by sixty P1 and TAC clones.</title>
        <authorList>
            <person name="Sato S."/>
            <person name="Nakamura Y."/>
            <person name="Kaneko T."/>
            <person name="Katoh T."/>
            <person name="Asamizu E."/>
            <person name="Tabata S."/>
        </authorList>
    </citation>
    <scope>NUCLEOTIDE SEQUENCE [LARGE SCALE GENOMIC DNA]</scope>
    <source>
        <strain>cv. Columbia</strain>
    </source>
</reference>
<reference key="3">
    <citation type="journal article" date="2017" name="Plant J.">
        <title>Araport11: a complete reannotation of the Arabidopsis thaliana reference genome.</title>
        <authorList>
            <person name="Cheng C.Y."/>
            <person name="Krishnakumar V."/>
            <person name="Chan A.P."/>
            <person name="Thibaud-Nissen F."/>
            <person name="Schobel S."/>
            <person name="Town C.D."/>
        </authorList>
    </citation>
    <scope>GENOME REANNOTATION</scope>
    <source>
        <strain>cv. Columbia</strain>
    </source>
</reference>
<reference key="4">
    <citation type="journal article" date="2003" name="Science">
        <title>Empirical analysis of transcriptional activity in the Arabidopsis genome.</title>
        <authorList>
            <person name="Yamada K."/>
            <person name="Lim J."/>
            <person name="Dale J.M."/>
            <person name="Chen H."/>
            <person name="Shinn P."/>
            <person name="Palm C.J."/>
            <person name="Southwick A.M."/>
            <person name="Wu H.C."/>
            <person name="Kim C.J."/>
            <person name="Nguyen M."/>
            <person name="Pham P.K."/>
            <person name="Cheuk R.F."/>
            <person name="Karlin-Newmann G."/>
            <person name="Liu S.X."/>
            <person name="Lam B."/>
            <person name="Sakano H."/>
            <person name="Wu T."/>
            <person name="Yu G."/>
            <person name="Miranda M."/>
            <person name="Quach H.L."/>
            <person name="Tripp M."/>
            <person name="Chang C.H."/>
            <person name="Lee J.M."/>
            <person name="Toriumi M.J."/>
            <person name="Chan M.M."/>
            <person name="Tang C.C."/>
            <person name="Onodera C.S."/>
            <person name="Deng J.M."/>
            <person name="Akiyama K."/>
            <person name="Ansari Y."/>
            <person name="Arakawa T."/>
            <person name="Banh J."/>
            <person name="Banno F."/>
            <person name="Bowser L."/>
            <person name="Brooks S.Y."/>
            <person name="Carninci P."/>
            <person name="Chao Q."/>
            <person name="Choy N."/>
            <person name="Enju A."/>
            <person name="Goldsmith A.D."/>
            <person name="Gurjal M."/>
            <person name="Hansen N.F."/>
            <person name="Hayashizaki Y."/>
            <person name="Johnson-Hopson C."/>
            <person name="Hsuan V.W."/>
            <person name="Iida K."/>
            <person name="Karnes M."/>
            <person name="Khan S."/>
            <person name="Koesema E."/>
            <person name="Ishida J."/>
            <person name="Jiang P.X."/>
            <person name="Jones T."/>
            <person name="Kawai J."/>
            <person name="Kamiya A."/>
            <person name="Meyers C."/>
            <person name="Nakajima M."/>
            <person name="Narusaka M."/>
            <person name="Seki M."/>
            <person name="Sakurai T."/>
            <person name="Satou M."/>
            <person name="Tamse R."/>
            <person name="Vaysberg M."/>
            <person name="Wallender E.K."/>
            <person name="Wong C."/>
            <person name="Yamamura Y."/>
            <person name="Yuan S."/>
            <person name="Shinozaki K."/>
            <person name="Davis R.W."/>
            <person name="Theologis A."/>
            <person name="Ecker J.R."/>
        </authorList>
    </citation>
    <scope>NUCLEOTIDE SEQUENCE [LARGE SCALE MRNA]</scope>
    <source>
        <strain>cv. Columbia</strain>
    </source>
</reference>
<reference key="5">
    <citation type="journal article" date="2002" name="Plant Mol. Biol.">
        <title>Molecular analysis of de novo pyrimidine synthesis in solanaceous species.</title>
        <authorList>
            <person name="Giermann N."/>
            <person name="Schroder M."/>
            <person name="Ritter T."/>
            <person name="Zrenner R."/>
        </authorList>
    </citation>
    <scope>IDENTIFICATION</scope>
</reference>
<reference key="6">
    <citation type="journal article" date="2009" name="New Phytol.">
        <title>A functional analysis of the pyrimidine catabolic pathway in Arabidopsis.</title>
        <authorList>
            <person name="Zrenner R."/>
            <person name="Riegler H."/>
            <person name="Marquard C.R."/>
            <person name="Lange P.R."/>
            <person name="Geserick C."/>
            <person name="Bartosz C.E."/>
            <person name="Chen C.T."/>
            <person name="Slocum R.D."/>
        </authorList>
    </citation>
    <scope>FUNCTION</scope>
    <scope>CATALYTIC ACTIVITY</scope>
    <scope>DEVELOPMENTAL STAGE</scope>
    <scope>INDUCTION BY NITROGEN LIMITATION</scope>
    <scope>SUBCELLULAR LOCATION</scope>
    <scope>DISRUPTION PHENOTYPE</scope>
    <source>
        <strain>cv. Columbia</strain>
    </source>
</reference>
<reference key="7">
    <citation type="journal article" date="2011" name="J. Exp. Bot.">
        <title>Pyrimidine degradation influences germination seedling growth and production of Arabidopsis seeds.</title>
        <authorList>
            <person name="Cornelius S."/>
            <person name="Witz S."/>
            <person name="Rolletschek H."/>
            <person name="Mohlmann T."/>
        </authorList>
    </citation>
    <scope>FUNCTION</scope>
    <scope>TISSUE SPECIFICITY</scope>
    <scope>DISRUPTION PHENOTYPE</scope>
    <scope>SUBCELLULAR LOCATION</scope>
    <scope>DEVELOPMENTAL STAGE</scope>
    <source>
        <strain>cv. Columbia</strain>
    </source>
</reference>
<reference key="8">
    <citation type="journal article" date="2012" name="Mol. Cell. Proteomics">
        <title>Comparative large-scale characterisation of plant vs. mammal proteins reveals similar and idiosyncratic N-alpha acetylation features.</title>
        <authorList>
            <person name="Bienvenut W.V."/>
            <person name="Sumpton D."/>
            <person name="Martinez A."/>
            <person name="Lilla S."/>
            <person name="Espagne C."/>
            <person name="Meinnel T."/>
            <person name="Giglione C."/>
        </authorList>
    </citation>
    <scope>ACETYLATION [LARGE SCALE ANALYSIS] AT ALA-45</scope>
    <scope>CLEAVAGE OF TRANSIT PEPTIDE [LARGE SCALE ANALYSIS] AFTER SER-44</scope>
    <scope>IDENTIFICATION BY MASS SPECTROMETRY [LARGE SCALE ANALYSIS]</scope>
</reference>
<gene>
    <name evidence="8" type="primary">PYD1</name>
    <name evidence="9" type="synonym">PYD1A</name>
    <name evidence="11" type="ordered locus">At3g17810</name>
    <name evidence="12" type="ORF">MEB5.3</name>
</gene>
<feature type="transit peptide" description="Chloroplast" evidence="14">
    <location>
        <begin position="1"/>
        <end position="44"/>
    </location>
</feature>
<feature type="chain" id="PRO_0000432454" description="Dihydropyrimidine dehydrogenase (NADP(+)), chloroplastic" evidence="2">
    <location>
        <begin position="45"/>
        <end position="426"/>
    </location>
</feature>
<feature type="region of interest" description="Disordered" evidence="4">
    <location>
        <begin position="395"/>
        <end position="414"/>
    </location>
</feature>
<feature type="active site" description="Nucleophile" evidence="3">
    <location>
        <position position="191"/>
    </location>
</feature>
<feature type="binding site" evidence="1">
    <location>
        <position position="129"/>
    </location>
    <ligand>
        <name>substrate</name>
    </ligand>
</feature>
<feature type="binding site" evidence="1">
    <location>
        <begin position="188"/>
        <end position="190"/>
    </location>
    <ligand>
        <name>substrate</name>
    </ligand>
</feature>
<feature type="binding site" evidence="1">
    <location>
        <begin position="256"/>
        <end position="257"/>
    </location>
    <ligand>
        <name>substrate</name>
    </ligand>
</feature>
<feature type="modified residue" description="N-acetylalanine" evidence="14">
    <location>
        <position position="45"/>
    </location>
</feature>
<organism evidence="13">
    <name type="scientific">Arabidopsis thaliana</name>
    <name type="common">Mouse-ear cress</name>
    <dbReference type="NCBI Taxonomy" id="3702"/>
    <lineage>
        <taxon>Eukaryota</taxon>
        <taxon>Viridiplantae</taxon>
        <taxon>Streptophyta</taxon>
        <taxon>Embryophyta</taxon>
        <taxon>Tracheophyta</taxon>
        <taxon>Spermatophyta</taxon>
        <taxon>Magnoliopsida</taxon>
        <taxon>eudicotyledons</taxon>
        <taxon>Gunneridae</taxon>
        <taxon>Pentapetalae</taxon>
        <taxon>rosids</taxon>
        <taxon>malvids</taxon>
        <taxon>Brassicales</taxon>
        <taxon>Brassicaceae</taxon>
        <taxon>Camelineae</taxon>
        <taxon>Arabidopsis</taxon>
    </lineage>
</organism>
<dbReference type="EC" id="1.3.1.2" evidence="5"/>
<dbReference type="EMBL" id="AF545062">
    <property type="protein sequence ID" value="AAN64919.1"/>
    <property type="molecule type" value="mRNA"/>
</dbReference>
<dbReference type="EMBL" id="AB019230">
    <property type="protein sequence ID" value="BAB02704.1"/>
    <property type="molecule type" value="Genomic_DNA"/>
</dbReference>
<dbReference type="EMBL" id="CP002686">
    <property type="protein sequence ID" value="AEE76010.1"/>
    <property type="molecule type" value="Genomic_DNA"/>
</dbReference>
<dbReference type="EMBL" id="AY035029">
    <property type="protein sequence ID" value="AAK59534.1"/>
    <property type="molecule type" value="mRNA"/>
</dbReference>
<dbReference type="EMBL" id="AY059103">
    <property type="protein sequence ID" value="AAL15209.1"/>
    <property type="molecule type" value="mRNA"/>
</dbReference>
<dbReference type="RefSeq" id="NP_188408.1">
    <property type="nucleotide sequence ID" value="NM_112662.4"/>
</dbReference>
<dbReference type="SMR" id="Q9LVI9"/>
<dbReference type="FunCoup" id="Q9LVI9">
    <property type="interactions" value="440"/>
</dbReference>
<dbReference type="STRING" id="3702.Q9LVI9"/>
<dbReference type="GlyGen" id="Q9LVI9">
    <property type="glycosylation" value="1 site"/>
</dbReference>
<dbReference type="iPTMnet" id="Q9LVI9"/>
<dbReference type="PaxDb" id="3702-AT3G17810.1"/>
<dbReference type="ProteomicsDB" id="241252"/>
<dbReference type="EnsemblPlants" id="AT3G17810.1">
    <property type="protein sequence ID" value="AT3G17810.1"/>
    <property type="gene ID" value="AT3G17810"/>
</dbReference>
<dbReference type="GeneID" id="821049"/>
<dbReference type="Gramene" id="AT3G17810.1">
    <property type="protein sequence ID" value="AT3G17810.1"/>
    <property type="gene ID" value="AT3G17810"/>
</dbReference>
<dbReference type="KEGG" id="ath:AT3G17810"/>
<dbReference type="Araport" id="AT3G17810"/>
<dbReference type="TAIR" id="AT3G17810">
    <property type="gene designation" value="PYD1"/>
</dbReference>
<dbReference type="eggNOG" id="KOG1799">
    <property type="taxonomic scope" value="Eukaryota"/>
</dbReference>
<dbReference type="HOGENOM" id="CLU_042042_1_1_1"/>
<dbReference type="InParanoid" id="Q9LVI9"/>
<dbReference type="OMA" id="FRIVEDM"/>
<dbReference type="PhylomeDB" id="Q9LVI9"/>
<dbReference type="BioCyc" id="ARA:AT3G17810-MONOMER"/>
<dbReference type="BioCyc" id="MetaCyc:AT3G17810-MONOMER"/>
<dbReference type="UniPathway" id="UPA00131"/>
<dbReference type="CD-CODE" id="4299E36E">
    <property type="entry name" value="Nucleolus"/>
</dbReference>
<dbReference type="PRO" id="PR:Q9LVI9"/>
<dbReference type="Proteomes" id="UP000006548">
    <property type="component" value="Chromosome 3"/>
</dbReference>
<dbReference type="ExpressionAtlas" id="Q9LVI9">
    <property type="expression patterns" value="baseline and differential"/>
</dbReference>
<dbReference type="GO" id="GO:0009507">
    <property type="term" value="C:chloroplast"/>
    <property type="evidence" value="ECO:0007005"/>
    <property type="project" value="TAIR"/>
</dbReference>
<dbReference type="GO" id="GO:0009570">
    <property type="term" value="C:chloroplast stroma"/>
    <property type="evidence" value="ECO:0007005"/>
    <property type="project" value="TAIR"/>
</dbReference>
<dbReference type="GO" id="GO:0009536">
    <property type="term" value="C:plastid"/>
    <property type="evidence" value="ECO:0000314"/>
    <property type="project" value="TAIR"/>
</dbReference>
<dbReference type="GO" id="GO:0017113">
    <property type="term" value="F:dihydropyrimidine dehydrogenase (NADP+) activity"/>
    <property type="evidence" value="ECO:0000315"/>
    <property type="project" value="TAIR"/>
</dbReference>
<dbReference type="GO" id="GO:0019483">
    <property type="term" value="P:beta-alanine biosynthetic process"/>
    <property type="evidence" value="ECO:0007669"/>
    <property type="project" value="UniProtKB-UniPathway"/>
</dbReference>
<dbReference type="GO" id="GO:0043562">
    <property type="term" value="P:cellular response to nitrogen levels"/>
    <property type="evidence" value="ECO:0000270"/>
    <property type="project" value="TAIR"/>
</dbReference>
<dbReference type="GO" id="GO:0006212">
    <property type="term" value="P:uracil catabolic process"/>
    <property type="evidence" value="ECO:0000315"/>
    <property type="project" value="TAIR"/>
</dbReference>
<dbReference type="CDD" id="cd02940">
    <property type="entry name" value="DHPD_FMN"/>
    <property type="match status" value="1"/>
</dbReference>
<dbReference type="FunFam" id="3.20.20.70:FF:000121">
    <property type="entry name" value="Dihydropyrimidine dehydrogenase (NADP(+)), chloroplastic"/>
    <property type="match status" value="1"/>
</dbReference>
<dbReference type="Gene3D" id="3.20.20.70">
    <property type="entry name" value="Aldolase class I"/>
    <property type="match status" value="1"/>
</dbReference>
<dbReference type="InterPro" id="IPR013785">
    <property type="entry name" value="Aldolase_TIM"/>
</dbReference>
<dbReference type="InterPro" id="IPR005720">
    <property type="entry name" value="Dihydroorotate_DH_cat"/>
</dbReference>
<dbReference type="NCBIfam" id="NF006183">
    <property type="entry name" value="PRK08318.1"/>
    <property type="match status" value="1"/>
</dbReference>
<dbReference type="PANTHER" id="PTHR43073">
    <property type="entry name" value="DIHYDROPYRIMIDINE DEHYDROGENASE [NADP(+)]"/>
    <property type="match status" value="1"/>
</dbReference>
<dbReference type="PANTHER" id="PTHR43073:SF2">
    <property type="entry name" value="DIHYDROPYRIMIDINE DEHYDROGENASE [NADP(+)]"/>
    <property type="match status" value="1"/>
</dbReference>
<dbReference type="Pfam" id="PF01180">
    <property type="entry name" value="DHO_dh"/>
    <property type="match status" value="1"/>
</dbReference>
<dbReference type="SUPFAM" id="SSF51395">
    <property type="entry name" value="FMN-linked oxidoreductases"/>
    <property type="match status" value="1"/>
</dbReference>
<keyword id="KW-0007">Acetylation</keyword>
<keyword id="KW-0150">Chloroplast</keyword>
<keyword id="KW-0521">NADP</keyword>
<keyword id="KW-0560">Oxidoreductase</keyword>
<keyword id="KW-0934">Plastid</keyword>
<keyword id="KW-1185">Reference proteome</keyword>
<keyword id="KW-0809">Transit peptide</keyword>
<proteinExistence type="evidence at protein level"/>